<proteinExistence type="inferred from homology"/>
<comment type="function">
    <text evidence="2">Component of the ubiquinol-cytochrome c reductase complex (complex III or cytochrome b-c1 complex) that is part of the mitochondrial respiratory chain. The b-c1 complex mediates electron transfer from ubiquinol to cytochrome c. Contributes to the generation of a proton gradient across the mitochondrial membrane that is then used for ATP synthesis.</text>
</comment>
<comment type="cofactor">
    <cofactor evidence="2">
        <name>heme b</name>
        <dbReference type="ChEBI" id="CHEBI:60344"/>
    </cofactor>
    <text evidence="2">Binds 2 heme b groups non-covalently.</text>
</comment>
<comment type="subunit">
    <text evidence="2">The cytochrome bc1 complex contains 11 subunits: 3 respiratory subunits (MT-CYB, CYC1 and UQCRFS1), 2 core proteins (UQCRC1 and UQCRC2) and 6 low-molecular weight proteins (UQCRH/QCR6, UQCRB/QCR7, UQCRQ/QCR8, UQCR10/QCR9, UQCR11/QCR10 and a cleavage product of UQCRFS1). This cytochrome bc1 complex then forms a dimer.</text>
</comment>
<comment type="subcellular location">
    <subcellularLocation>
        <location evidence="2">Mitochondrion inner membrane</location>
        <topology evidence="2">Multi-pass membrane protein</topology>
    </subcellularLocation>
</comment>
<comment type="miscellaneous">
    <text evidence="1">Heme 1 (or BL or b562) is low-potential and absorbs at about 562 nm, and heme 2 (or BH or b566) is high-potential and absorbs at about 566 nm.</text>
</comment>
<comment type="similarity">
    <text evidence="3 4">Belongs to the cytochrome b family.</text>
</comment>
<comment type="caution">
    <text evidence="2">The full-length protein contains only eight transmembrane helices, not nine as predicted by bioinformatics tools.</text>
</comment>
<gene>
    <name type="primary">MT-CYB</name>
    <name type="synonym">COB</name>
    <name type="synonym">CYTB</name>
    <name type="synonym">MTCYB</name>
</gene>
<organism>
    <name type="scientific">Pan troglodytes</name>
    <name type="common">Chimpanzee</name>
    <dbReference type="NCBI Taxonomy" id="9598"/>
    <lineage>
        <taxon>Eukaryota</taxon>
        <taxon>Metazoa</taxon>
        <taxon>Chordata</taxon>
        <taxon>Craniata</taxon>
        <taxon>Vertebrata</taxon>
        <taxon>Euteleostomi</taxon>
        <taxon>Mammalia</taxon>
        <taxon>Eutheria</taxon>
        <taxon>Euarchontoglires</taxon>
        <taxon>Primates</taxon>
        <taxon>Haplorrhini</taxon>
        <taxon>Catarrhini</taxon>
        <taxon>Hominidae</taxon>
        <taxon>Pan</taxon>
    </lineage>
</organism>
<reference key="1">
    <citation type="journal article" date="1995" name="Proc. Natl. Acad. Sci. U.S.A.">
        <title>Recent African origin of modern humans revealed by complete sequences of hominoid mitochondrial DNAs.</title>
        <authorList>
            <person name="Horai S."/>
            <person name="Hayasaka K."/>
            <person name="Kondo R."/>
            <person name="Tsugane K."/>
            <person name="Takahata N."/>
        </authorList>
    </citation>
    <scope>NUCLEOTIDE SEQUENCE [GENOMIC DNA]</scope>
</reference>
<protein>
    <recommendedName>
        <fullName>Cytochrome b</fullName>
    </recommendedName>
    <alternativeName>
        <fullName>Complex III subunit 3</fullName>
    </alternativeName>
    <alternativeName>
        <fullName>Complex III subunit III</fullName>
    </alternativeName>
    <alternativeName>
        <fullName>Cytochrome b-c1 complex subunit 3</fullName>
    </alternativeName>
    <alternativeName>
        <fullName>Ubiquinol-cytochrome-c reductase complex cytochrome b subunit</fullName>
    </alternativeName>
</protein>
<accession>Q9T9V5</accession>
<name>CYB_PANTR</name>
<dbReference type="EMBL" id="D38113">
    <property type="protein sequence ID" value="BAA85276.1"/>
    <property type="molecule type" value="Genomic_DNA"/>
</dbReference>
<dbReference type="RefSeq" id="NP_008198.1">
    <property type="nucleotide sequence ID" value="NC_001643.1"/>
</dbReference>
<dbReference type="SMR" id="Q9T9V5"/>
<dbReference type="FunCoup" id="Q9T9V5">
    <property type="interactions" value="348"/>
</dbReference>
<dbReference type="STRING" id="9598.ENSPTRP00000061405"/>
<dbReference type="PaxDb" id="9598-ENSPTRP00000061405"/>
<dbReference type="Ensembl" id="ENSPTRT00000076383.1">
    <property type="protein sequence ID" value="ENSPTRP00000061405.1"/>
    <property type="gene ID" value="ENSPTRG00000042637.1"/>
</dbReference>
<dbReference type="GeneID" id="807858"/>
<dbReference type="KEGG" id="ptr:807858"/>
<dbReference type="CTD" id="4519"/>
<dbReference type="VGNC" id="VGNC:11718">
    <property type="gene designation" value="MT-CYB"/>
</dbReference>
<dbReference type="eggNOG" id="KOG4663">
    <property type="taxonomic scope" value="Eukaryota"/>
</dbReference>
<dbReference type="GeneTree" id="ENSGT00390000017948"/>
<dbReference type="HOGENOM" id="CLU_031114_3_0_1"/>
<dbReference type="InParanoid" id="Q9T9V5"/>
<dbReference type="OMA" id="NISAWWN"/>
<dbReference type="Proteomes" id="UP000002277">
    <property type="component" value="Mitochondrion"/>
</dbReference>
<dbReference type="Bgee" id="ENSPTRG00000042637">
    <property type="expression patterns" value="Expressed in dorsolateral prefrontal cortex and 20 other cell types or tissues"/>
</dbReference>
<dbReference type="GO" id="GO:0016020">
    <property type="term" value="C:membrane"/>
    <property type="evidence" value="ECO:0000318"/>
    <property type="project" value="GO_Central"/>
</dbReference>
<dbReference type="GO" id="GO:0005743">
    <property type="term" value="C:mitochondrial inner membrane"/>
    <property type="evidence" value="ECO:0007669"/>
    <property type="project" value="UniProtKB-SubCell"/>
</dbReference>
<dbReference type="GO" id="GO:0045275">
    <property type="term" value="C:respiratory chain complex III"/>
    <property type="evidence" value="ECO:0000318"/>
    <property type="project" value="GO_Central"/>
</dbReference>
<dbReference type="GO" id="GO:0046872">
    <property type="term" value="F:metal ion binding"/>
    <property type="evidence" value="ECO:0007669"/>
    <property type="project" value="UniProtKB-KW"/>
</dbReference>
<dbReference type="GO" id="GO:0008121">
    <property type="term" value="F:ubiquinol-cytochrome-c reductase activity"/>
    <property type="evidence" value="ECO:0007669"/>
    <property type="project" value="InterPro"/>
</dbReference>
<dbReference type="GO" id="GO:0006122">
    <property type="term" value="P:mitochondrial electron transport, ubiquinol to cytochrome c"/>
    <property type="evidence" value="ECO:0000318"/>
    <property type="project" value="GO_Central"/>
</dbReference>
<dbReference type="CDD" id="cd00290">
    <property type="entry name" value="cytochrome_b_C"/>
    <property type="match status" value="1"/>
</dbReference>
<dbReference type="CDD" id="cd00284">
    <property type="entry name" value="Cytochrome_b_N"/>
    <property type="match status" value="1"/>
</dbReference>
<dbReference type="FunFam" id="1.20.810.10:FF:000002">
    <property type="entry name" value="Cytochrome b"/>
    <property type="match status" value="1"/>
</dbReference>
<dbReference type="Gene3D" id="1.20.810.10">
    <property type="entry name" value="Cytochrome Bc1 Complex, Chain C"/>
    <property type="match status" value="1"/>
</dbReference>
<dbReference type="InterPro" id="IPR005798">
    <property type="entry name" value="Cyt_b/b6_C"/>
</dbReference>
<dbReference type="InterPro" id="IPR036150">
    <property type="entry name" value="Cyt_b/b6_C_sf"/>
</dbReference>
<dbReference type="InterPro" id="IPR005797">
    <property type="entry name" value="Cyt_b/b6_N"/>
</dbReference>
<dbReference type="InterPro" id="IPR027387">
    <property type="entry name" value="Cytb/b6-like_sf"/>
</dbReference>
<dbReference type="InterPro" id="IPR030689">
    <property type="entry name" value="Cytochrome_b"/>
</dbReference>
<dbReference type="InterPro" id="IPR048260">
    <property type="entry name" value="Cytochrome_b_C_euk/bac"/>
</dbReference>
<dbReference type="InterPro" id="IPR048259">
    <property type="entry name" value="Cytochrome_b_N_euk/bac"/>
</dbReference>
<dbReference type="InterPro" id="IPR016174">
    <property type="entry name" value="Di-haem_cyt_TM"/>
</dbReference>
<dbReference type="PANTHER" id="PTHR19271">
    <property type="entry name" value="CYTOCHROME B"/>
    <property type="match status" value="1"/>
</dbReference>
<dbReference type="PANTHER" id="PTHR19271:SF16">
    <property type="entry name" value="CYTOCHROME B"/>
    <property type="match status" value="1"/>
</dbReference>
<dbReference type="Pfam" id="PF00032">
    <property type="entry name" value="Cytochrom_B_C"/>
    <property type="match status" value="1"/>
</dbReference>
<dbReference type="Pfam" id="PF00033">
    <property type="entry name" value="Cytochrome_B"/>
    <property type="match status" value="1"/>
</dbReference>
<dbReference type="PIRSF" id="PIRSF038885">
    <property type="entry name" value="COB"/>
    <property type="match status" value="1"/>
</dbReference>
<dbReference type="SUPFAM" id="SSF81648">
    <property type="entry name" value="a domain/subunit of cytochrome bc1 complex (Ubiquinol-cytochrome c reductase)"/>
    <property type="match status" value="1"/>
</dbReference>
<dbReference type="SUPFAM" id="SSF81342">
    <property type="entry name" value="Transmembrane di-heme cytochromes"/>
    <property type="match status" value="1"/>
</dbReference>
<dbReference type="PROSITE" id="PS51003">
    <property type="entry name" value="CYTB_CTER"/>
    <property type="match status" value="1"/>
</dbReference>
<dbReference type="PROSITE" id="PS51002">
    <property type="entry name" value="CYTB_NTER"/>
    <property type="match status" value="1"/>
</dbReference>
<geneLocation type="mitochondrion"/>
<sequence>MTPTRKINPLMKLINHSFIDLPTPSNISAWWNFGSLLGACLILQITTGLFLAMHYSPDASTAFSSIAHITRDVNYGWIIRYLHANGASMFFICLFLHIGRGLYYGSFLYLETWNIGIILLLTTMATAFMGYVLPWGQMSFWGATVITNLLSAIPYIGTDLVQWVWGGYSVDSPTLTRFFTFHFILPFIITALTTLHLLFLHETGSNNPLGITSHSDKITFHPYYTIKDILGLFLFLLILMTLTLFSPGLLGDPDNYTLANPLNTPPHIKPEWYFLFAYTILRSIPNKLGGVLALLLSILILTAIPVLHTSKQQSMMFRPLSQLLYWLLATDLLILTWIGGQPVSYPFITIGQMASVLYFTTILILMPIASLIENKMLEWT</sequence>
<keyword id="KW-0249">Electron transport</keyword>
<keyword id="KW-0349">Heme</keyword>
<keyword id="KW-0408">Iron</keyword>
<keyword id="KW-0472">Membrane</keyword>
<keyword id="KW-0479">Metal-binding</keyword>
<keyword id="KW-0496">Mitochondrion</keyword>
<keyword id="KW-0999">Mitochondrion inner membrane</keyword>
<keyword id="KW-1185">Reference proteome</keyword>
<keyword id="KW-0679">Respiratory chain</keyword>
<keyword id="KW-0812">Transmembrane</keyword>
<keyword id="KW-1133">Transmembrane helix</keyword>
<keyword id="KW-0813">Transport</keyword>
<keyword id="KW-0830">Ubiquinone</keyword>
<feature type="chain" id="PRO_0000061343" description="Cytochrome b">
    <location>
        <begin position="1"/>
        <end position="380"/>
    </location>
</feature>
<feature type="transmembrane region" description="Helical" evidence="2">
    <location>
        <begin position="33"/>
        <end position="53"/>
    </location>
</feature>
<feature type="transmembrane region" description="Helical" evidence="2">
    <location>
        <begin position="77"/>
        <end position="98"/>
    </location>
</feature>
<feature type="transmembrane region" description="Helical" evidence="2">
    <location>
        <begin position="113"/>
        <end position="133"/>
    </location>
</feature>
<feature type="transmembrane region" description="Helical" evidence="2">
    <location>
        <begin position="178"/>
        <end position="198"/>
    </location>
</feature>
<feature type="transmembrane region" description="Helical" evidence="2">
    <location>
        <begin position="226"/>
        <end position="246"/>
    </location>
</feature>
<feature type="transmembrane region" description="Helical" evidence="2">
    <location>
        <begin position="288"/>
        <end position="308"/>
    </location>
</feature>
<feature type="transmembrane region" description="Helical" evidence="2">
    <location>
        <begin position="320"/>
        <end position="340"/>
    </location>
</feature>
<feature type="transmembrane region" description="Helical" evidence="2">
    <location>
        <begin position="347"/>
        <end position="367"/>
    </location>
</feature>
<feature type="binding site" description="axial binding residue" evidence="2">
    <location>
        <position position="83"/>
    </location>
    <ligand>
        <name>heme b</name>
        <dbReference type="ChEBI" id="CHEBI:60344"/>
        <label>b562</label>
    </ligand>
    <ligandPart>
        <name>Fe</name>
        <dbReference type="ChEBI" id="CHEBI:18248"/>
    </ligandPart>
</feature>
<feature type="binding site" description="axial binding residue" evidence="2">
    <location>
        <position position="97"/>
    </location>
    <ligand>
        <name>heme b</name>
        <dbReference type="ChEBI" id="CHEBI:60344"/>
        <label>b566</label>
    </ligand>
    <ligandPart>
        <name>Fe</name>
        <dbReference type="ChEBI" id="CHEBI:18248"/>
    </ligandPart>
</feature>
<feature type="binding site" description="axial binding residue" evidence="2">
    <location>
        <position position="182"/>
    </location>
    <ligand>
        <name>heme b</name>
        <dbReference type="ChEBI" id="CHEBI:60344"/>
        <label>b562</label>
    </ligand>
    <ligandPart>
        <name>Fe</name>
        <dbReference type="ChEBI" id="CHEBI:18248"/>
    </ligandPart>
</feature>
<feature type="binding site" description="axial binding residue" evidence="2">
    <location>
        <position position="196"/>
    </location>
    <ligand>
        <name>heme b</name>
        <dbReference type="ChEBI" id="CHEBI:60344"/>
        <label>b566</label>
    </ligand>
    <ligandPart>
        <name>Fe</name>
        <dbReference type="ChEBI" id="CHEBI:18248"/>
    </ligandPart>
</feature>
<feature type="binding site" evidence="2">
    <location>
        <position position="201"/>
    </location>
    <ligand>
        <name>a ubiquinone</name>
        <dbReference type="ChEBI" id="CHEBI:16389"/>
    </ligand>
</feature>
<evidence type="ECO:0000250" key="1"/>
<evidence type="ECO:0000250" key="2">
    <source>
        <dbReference type="UniProtKB" id="P00157"/>
    </source>
</evidence>
<evidence type="ECO:0000255" key="3">
    <source>
        <dbReference type="PROSITE-ProRule" id="PRU00967"/>
    </source>
</evidence>
<evidence type="ECO:0000255" key="4">
    <source>
        <dbReference type="PROSITE-ProRule" id="PRU00968"/>
    </source>
</evidence>